<feature type="chain" id="PRO_0000441179" description="Nonribosomal peptide synthetase aclP">
    <location>
        <begin position="1"/>
        <end position="1625"/>
    </location>
</feature>
<feature type="domain" description="Carrier 1" evidence="3">
    <location>
        <begin position="47"/>
        <end position="123"/>
    </location>
</feature>
<feature type="domain" description="Carrier 2" evidence="3">
    <location>
        <begin position="1096"/>
        <end position="1171"/>
    </location>
</feature>
<feature type="region of interest" description="Disordered" evidence="4">
    <location>
        <begin position="127"/>
        <end position="157"/>
    </location>
</feature>
<feature type="region of interest" description="Condensation 1" evidence="2">
    <location>
        <begin position="286"/>
        <end position="567"/>
    </location>
</feature>
<feature type="region of interest" description="Adenylation" evidence="2">
    <location>
        <begin position="614"/>
        <end position="997"/>
    </location>
</feature>
<feature type="region of interest" description="Condensation 2" evidence="2">
    <location>
        <begin position="1195"/>
        <end position="1585"/>
    </location>
</feature>
<feature type="modified residue" description="O-(pantetheine 4'-phosphoryl)serine" evidence="3">
    <location>
        <position position="84"/>
    </location>
</feature>
<feature type="modified residue" description="O-(pantetheine 4'-phosphoryl)serine" evidence="3">
    <location>
        <position position="1131"/>
    </location>
</feature>
<name>ACLP_ASPOR</name>
<reference key="1">
    <citation type="journal article" date="2005" name="Nature">
        <title>Genome sequencing and analysis of Aspergillus oryzae.</title>
        <authorList>
            <person name="Machida M."/>
            <person name="Asai K."/>
            <person name="Sano M."/>
            <person name="Tanaka T."/>
            <person name="Kumagai T."/>
            <person name="Terai G."/>
            <person name="Kusumoto K."/>
            <person name="Arima T."/>
            <person name="Akita O."/>
            <person name="Kashiwagi Y."/>
            <person name="Abe K."/>
            <person name="Gomi K."/>
            <person name="Horiuchi H."/>
            <person name="Kitamoto K."/>
            <person name="Kobayashi T."/>
            <person name="Takeuchi M."/>
            <person name="Denning D.W."/>
            <person name="Galagan J.E."/>
            <person name="Nierman W.C."/>
            <person name="Yu J."/>
            <person name="Archer D.B."/>
            <person name="Bennett J.W."/>
            <person name="Bhatnagar D."/>
            <person name="Cleveland T.E."/>
            <person name="Fedorova N.D."/>
            <person name="Gotoh O."/>
            <person name="Horikawa H."/>
            <person name="Hosoyama A."/>
            <person name="Ichinomiya M."/>
            <person name="Igarashi R."/>
            <person name="Iwashita K."/>
            <person name="Juvvadi P.R."/>
            <person name="Kato M."/>
            <person name="Kato Y."/>
            <person name="Kin T."/>
            <person name="Kokubun A."/>
            <person name="Maeda H."/>
            <person name="Maeyama N."/>
            <person name="Maruyama J."/>
            <person name="Nagasaki H."/>
            <person name="Nakajima T."/>
            <person name="Oda K."/>
            <person name="Okada K."/>
            <person name="Paulsen I."/>
            <person name="Sakamoto K."/>
            <person name="Sawano T."/>
            <person name="Takahashi M."/>
            <person name="Takase K."/>
            <person name="Terabayashi Y."/>
            <person name="Wortman J.R."/>
            <person name="Yamada O."/>
            <person name="Yamagata Y."/>
            <person name="Anazawa H."/>
            <person name="Hata Y."/>
            <person name="Koide Y."/>
            <person name="Komori T."/>
            <person name="Koyama Y."/>
            <person name="Minetoki T."/>
            <person name="Suharnan S."/>
            <person name="Tanaka A."/>
            <person name="Isono K."/>
            <person name="Kuhara S."/>
            <person name="Ogasawara N."/>
            <person name="Kikuchi H."/>
        </authorList>
    </citation>
    <scope>NUCLEOTIDE SEQUENCE [LARGE SCALE GENOMIC DNA]</scope>
    <source>
        <strain>ATCC 42149 / RIB 40</strain>
    </source>
</reference>
<reference key="2">
    <citation type="journal article" date="2014" name="Angew. Chem. Int. Ed.">
        <title>Biosynthesis of the halogenated mycotoxin aspirochlorine in koji mold involves a cryptic amino acid conversion.</title>
        <authorList>
            <person name="Chankhamjon P."/>
            <person name="Boettger-Schmidt D."/>
            <person name="Scherlach K."/>
            <person name="Urbansky B."/>
            <person name="Lackner G."/>
            <person name="Kalb D."/>
            <person name="Dahse H.M."/>
            <person name="Hoffmeister D."/>
            <person name="Hertweck C."/>
        </authorList>
    </citation>
    <scope>FUNCTION</scope>
    <scope>DISRUPTION PHENOTYPE</scope>
    <scope>DOMAIN</scope>
    <scope>CATALYTIC ACTIVITY</scope>
    <scope>PATHWAY</scope>
</reference>
<gene>
    <name evidence="6" type="primary">aclP</name>
    <name type="ORF">AO090001000043</name>
</gene>
<accession>Q2UPA9</accession>
<evidence type="ECO:0000250" key="1">
    <source>
        <dbReference type="UniProtKB" id="Q4WMJ7"/>
    </source>
</evidence>
<evidence type="ECO:0000255" key="2"/>
<evidence type="ECO:0000255" key="3">
    <source>
        <dbReference type="PROSITE-ProRule" id="PRU00258"/>
    </source>
</evidence>
<evidence type="ECO:0000256" key="4">
    <source>
        <dbReference type="SAM" id="MobiDB-lite"/>
    </source>
</evidence>
<evidence type="ECO:0000269" key="5">
    <source>
    </source>
</evidence>
<evidence type="ECO:0000303" key="6">
    <source>
    </source>
</evidence>
<evidence type="ECO:0000305" key="7"/>
<evidence type="ECO:0000305" key="8">
    <source>
    </source>
</evidence>
<keyword id="KW-0436">Ligase</keyword>
<keyword id="KW-0596">Phosphopantetheine</keyword>
<keyword id="KW-0597">Phosphoprotein</keyword>
<keyword id="KW-1185">Reference proteome</keyword>
<keyword id="KW-0677">Repeat</keyword>
<proteinExistence type="evidence at protein level"/>
<comment type="function">
    <text evidence="5">Nonribosomal peptide synthetase; part of the gene cluster that mediates the biosynthesis of aspirochlorine (or antibiotic A30641), an unusual halogenated spiro compound with distinctive antifungal properties due to selective inhibition of protein biosynthesis, and which is also active against bacteria, viruses, and murine tumor cells (PubMed:25302411). The non-ribosomal peptide synthetase (NRPS) aclP is responsible the formation of the diketopiperazine (DKP) core from the condensation of 2 phenylalanine residues (PubMed:25302411). One Phe residue is tailored into chlorotyrosine by hydroxylation and chlorination, whereas the second Phe undergoes an unprecedented C-C bond cleavage to be converted into glycine (PubMed:25302411). After formation of the DKP, sulfur is incorporated into the DKP by conjugation with glutathione by aclG, followed by its stepwise degradation to the thiol by aclI, aclJ and aclK, and the dithiol oxidation by aclT (PubMed:25302411). In addition, oxygenases (aclB, aclC, aclL and aclO) and O-methyltransferases (aclM and aclU) act as tailoring enzymes to produce the intermediate dechloroaspirochlorine (PubMed:25302411). Ultimately, chlorination of dechloroaspirochlorine by the halogenase aclH is the last step in the aspirochlorine pathway (PubMed:25302411).</text>
</comment>
<comment type="pathway">
    <text evidence="8">Mycotoxin biosynthesis.</text>
</comment>
<comment type="domain">
    <text evidence="1 5">NRP synthetases are composed of discrete domains (adenylation (A), thiolation (T) or peptidyl carrier protein (PCP) and condensation (C) domains) which when grouped together are referred to as a single module (By similarity). Each module is responsible for the recognition (via the A domain) and incorporation of a single amino acid into the growing peptide product (By similarity). Thus, an NRP synthetase is generally composed of one or more modules and can terminate in a thioesterase domain (TE) that releases the newly synthesized peptide from the enzyme (By similarity). Occasionally, epimerase (E) domains (responsible for L- to D-amino acid conversion) are present within the NRP synthetase (By similarity). AclP has the following architecture: T-C-A-T-C (PubMed:25302411).</text>
</comment>
<comment type="disruption phenotype">
    <text evidence="5">Completely abrogates the biosynthesis of aspirochlorine, but also of the intermediate dechloroaspirochlorine (PubMed:25302411).</text>
</comment>
<comment type="similarity">
    <text evidence="7">Belongs to the NRP synthetase family.</text>
</comment>
<dbReference type="EC" id="6.3.2.-" evidence="5"/>
<dbReference type="EMBL" id="BA000050">
    <property type="protein sequence ID" value="BAE56606.1"/>
    <property type="molecule type" value="Genomic_DNA"/>
</dbReference>
<dbReference type="SMR" id="Q2UPA9"/>
<dbReference type="STRING" id="510516.Q2UPA9"/>
<dbReference type="EnsemblFungi" id="BAE56606">
    <property type="protein sequence ID" value="BAE56606"/>
    <property type="gene ID" value="AO090001000043"/>
</dbReference>
<dbReference type="HOGENOM" id="CLU_000022_0_5_1"/>
<dbReference type="OMA" id="WTTPDNG"/>
<dbReference type="Proteomes" id="UP000006564">
    <property type="component" value="Chromosome 2"/>
</dbReference>
<dbReference type="GO" id="GO:0005737">
    <property type="term" value="C:cytoplasm"/>
    <property type="evidence" value="ECO:0007669"/>
    <property type="project" value="TreeGrafter"/>
</dbReference>
<dbReference type="GO" id="GO:0016874">
    <property type="term" value="F:ligase activity"/>
    <property type="evidence" value="ECO:0007669"/>
    <property type="project" value="UniProtKB-KW"/>
</dbReference>
<dbReference type="GO" id="GO:0031177">
    <property type="term" value="F:phosphopantetheine binding"/>
    <property type="evidence" value="ECO:0007669"/>
    <property type="project" value="TreeGrafter"/>
</dbReference>
<dbReference type="GO" id="GO:0043041">
    <property type="term" value="P:amino acid activation for nonribosomal peptide biosynthetic process"/>
    <property type="evidence" value="ECO:0007669"/>
    <property type="project" value="TreeGrafter"/>
</dbReference>
<dbReference type="GO" id="GO:0044550">
    <property type="term" value="P:secondary metabolite biosynthetic process"/>
    <property type="evidence" value="ECO:0007669"/>
    <property type="project" value="TreeGrafter"/>
</dbReference>
<dbReference type="CDD" id="cd19537">
    <property type="entry name" value="C_NRPS-like"/>
    <property type="match status" value="1"/>
</dbReference>
<dbReference type="Gene3D" id="3.30.300.30">
    <property type="match status" value="1"/>
</dbReference>
<dbReference type="Gene3D" id="1.10.1200.10">
    <property type="entry name" value="ACP-like"/>
    <property type="match status" value="2"/>
</dbReference>
<dbReference type="Gene3D" id="3.30.559.10">
    <property type="entry name" value="Chloramphenicol acetyltransferase-like domain"/>
    <property type="match status" value="2"/>
</dbReference>
<dbReference type="Gene3D" id="3.40.50.12780">
    <property type="entry name" value="N-terminal domain of ligase-like"/>
    <property type="match status" value="1"/>
</dbReference>
<dbReference type="Gene3D" id="3.30.559.30">
    <property type="entry name" value="Nonribosomal peptide synthetase, condensation domain"/>
    <property type="match status" value="2"/>
</dbReference>
<dbReference type="InterPro" id="IPR010071">
    <property type="entry name" value="AA_adenyl_dom"/>
</dbReference>
<dbReference type="InterPro" id="IPR036736">
    <property type="entry name" value="ACP-like_sf"/>
</dbReference>
<dbReference type="InterPro" id="IPR045851">
    <property type="entry name" value="AMP-bd_C_sf"/>
</dbReference>
<dbReference type="InterPro" id="IPR020845">
    <property type="entry name" value="AMP-binding_CS"/>
</dbReference>
<dbReference type="InterPro" id="IPR000873">
    <property type="entry name" value="AMP-dep_synth/lig_dom"/>
</dbReference>
<dbReference type="InterPro" id="IPR042099">
    <property type="entry name" value="ANL_N_sf"/>
</dbReference>
<dbReference type="InterPro" id="IPR023213">
    <property type="entry name" value="CAT-like_dom_sf"/>
</dbReference>
<dbReference type="InterPro" id="IPR001242">
    <property type="entry name" value="Condensatn"/>
</dbReference>
<dbReference type="InterPro" id="IPR009081">
    <property type="entry name" value="PP-bd_ACP"/>
</dbReference>
<dbReference type="InterPro" id="IPR006162">
    <property type="entry name" value="Ppantetheine_attach_site"/>
</dbReference>
<dbReference type="NCBIfam" id="TIGR01733">
    <property type="entry name" value="AA-adenyl-dom"/>
    <property type="match status" value="1"/>
</dbReference>
<dbReference type="PANTHER" id="PTHR45527">
    <property type="entry name" value="NONRIBOSOMAL PEPTIDE SYNTHETASE"/>
    <property type="match status" value="1"/>
</dbReference>
<dbReference type="PANTHER" id="PTHR45527:SF11">
    <property type="entry name" value="NONRIBOSOMAL PEPTIDE SYNTHETASE 5"/>
    <property type="match status" value="1"/>
</dbReference>
<dbReference type="Pfam" id="PF00501">
    <property type="entry name" value="AMP-binding"/>
    <property type="match status" value="1"/>
</dbReference>
<dbReference type="Pfam" id="PF00668">
    <property type="entry name" value="Condensation"/>
    <property type="match status" value="2"/>
</dbReference>
<dbReference type="Pfam" id="PF00550">
    <property type="entry name" value="PP-binding"/>
    <property type="match status" value="2"/>
</dbReference>
<dbReference type="SUPFAM" id="SSF56801">
    <property type="entry name" value="Acetyl-CoA synthetase-like"/>
    <property type="match status" value="1"/>
</dbReference>
<dbReference type="SUPFAM" id="SSF47336">
    <property type="entry name" value="ACP-like"/>
    <property type="match status" value="2"/>
</dbReference>
<dbReference type="SUPFAM" id="SSF52777">
    <property type="entry name" value="CoA-dependent acyltransferases"/>
    <property type="match status" value="4"/>
</dbReference>
<dbReference type="PROSITE" id="PS00455">
    <property type="entry name" value="AMP_BINDING"/>
    <property type="match status" value="1"/>
</dbReference>
<dbReference type="PROSITE" id="PS50075">
    <property type="entry name" value="CARRIER"/>
    <property type="match status" value="2"/>
</dbReference>
<dbReference type="PROSITE" id="PS00012">
    <property type="entry name" value="PHOSPHOPANTETHEINE"/>
    <property type="match status" value="1"/>
</dbReference>
<organism>
    <name type="scientific">Aspergillus oryzae (strain ATCC 42149 / RIB 40)</name>
    <name type="common">Yellow koji mold</name>
    <dbReference type="NCBI Taxonomy" id="510516"/>
    <lineage>
        <taxon>Eukaryota</taxon>
        <taxon>Fungi</taxon>
        <taxon>Dikarya</taxon>
        <taxon>Ascomycota</taxon>
        <taxon>Pezizomycotina</taxon>
        <taxon>Eurotiomycetes</taxon>
        <taxon>Eurotiomycetidae</taxon>
        <taxon>Eurotiales</taxon>
        <taxon>Aspergillaceae</taxon>
        <taxon>Aspergillus</taxon>
        <taxon>Aspergillus subgen. Circumdati</taxon>
    </lineage>
</organism>
<protein>
    <recommendedName>
        <fullName evidence="6">Nonribosomal peptide synthetase aclP</fullName>
        <shortName evidence="6">NRPS aclP</shortName>
        <ecNumber evidence="5">6.3.2.-</ecNumber>
    </recommendedName>
    <alternativeName>
        <fullName evidence="6">Aspirochlorine biosynthesis protein P</fullName>
    </alternativeName>
</protein>
<sequence length="1625" mass="179635">MPLSGWPKGGYEVRLWYVHVPERYFIYMAADWNPRHAPINIGYPSRTTMNPSSQLLVQQLAAVLEVDTAELDLNSGFVHNGGNSLSAVEFVSRSKSLGVSLSIASILSSTNLRALFTDLLSSESNLIPIPDPSDDSDDLSNPSSSTGGSPRVATPISSNVSTAAEDDYLTQGSVLTQYATQSLSEMQASLLHGSLKSPGTNIIYHYETYQTDVIPVLKRAWKTVIEGEPIFHSSLLDGSARNQEYFTWSEVTVETEAEYREQLQTLWLKSVSSSFKVVHWKRSPPASSQSTVIWAVHHALVDGYSAMLLFCKVRRAIKGLPIVPGPSFSDVEKRIRVWRQEHKSQGDEYWAGHAAQLDQAQGELLLPAPTPEGTSSAITESEEVYVAPSVSNTQLHCVAKRLGVTLSTCYYAAWSLVLSLYADSASVVFGAVLAGRNLPLEGVDEVVGPLVNTLPLCLTLSRQQSAQDFLKNLFSRMVELAEYQWTTPDNGYTRNFSSAMAMQVPGPECKDGVSPIEPPYTRQTTDVPLSINILTDGAARFVYHTSQYSRADIVRLGKYFQRALQLLLRPHRPIEECLQGLLGCVDLQTLMGFGNCSSSLTTTVAIKEDLVTLFESAVSRNPMDVAVQKGNCHLTYQELDTHAGRVAATLRGYIQDGDVVCLHADRSVNWIVGIMGILKAGGVYCALDKALPQEARETIFSASGSRLFLVPSLSDQSFCPTDCDRLLVVEDLVKDDNVPITHRDSPRPQTDAYLCFTSGSTGKPKGVMCLHQGLVAFQRDLEVRLFAQPGRRVAQIMSVAFDGSIHEIFSALSYGAALVLQSGDDPFAHLSDVDSAILTPSMARVLNPADFERLSTVSTKVYLVGEPVTQDVCDRWSEQKTLYNMYGPTEGTCGATIKQLHPRQRVTIGPPNPSTRIYIMNQHQELVPPGVIGEIYIAGVQVARHYIGMPEQTAQRFVADPIIRIGERMYKTGDRGYWSEDGEVVCLGRTDRQIKLRGFRLDLDDLETRMIRAFPAVTAVALTRQGNHLIAAILPASTDVDAFSARVAQVLPPYATPRKILALDEFPTTKAGKRDYLAIAKLSAQAPVSTGRTLTSPMEKLVGDAFRDILQLGKDVALHTHSSFRELGGHSLLQLLLATRISQGVNRQVPLYVVAQHDRIDHLAAAIDSGLGLQQLVTTDPMGLGESAIAPIEREWWHKYQINESTSSFNVNFMAKIDDCLVDRARLVHACNEVMARHRVLRSRYIFSRAAGRVVRQYSPLAPRVQAVKTVNPWVEVNRPFSLSRSAPIRAVVSDSYFILTISHIVADLTTLQILLREISSHYQGGSLPSIPHTYMNSTLWYEKPTSCDLDFWSDCLGQLPDTTHLLGHGGYRRGYRGRSALCEVPPTTYQSMRHFLRQSSITAQQLSLATIALCLDDPSVPMPTETDIVLGIPYINRKSQEDLDVVGLFLEPLPVRISFGQETHNHEKASYLDTVQRSVRSSVGHAVHWDQLLEHLQVSTTPPDHPLFDVVVTFHSQSHSNGLELSAPGLRTCYTYAEGAKFRLLCEFSALSEDRLLLRLEYDTDCFTEENIQLLQARIPLALSLLVQNVPYDMIRQTLACPPETQPVKVLKPDVVFGTPLSDI</sequence>